<gene>
    <name evidence="9" type="primary">FKBP13</name>
    <name evidence="12" type="synonym">FKBP22-1</name>
    <name type="synonym">FKBPK</name>
    <name evidence="13" type="ordered locus">At5g45680</name>
    <name evidence="14" type="ORF">MRA19.7</name>
</gene>
<protein>
    <recommendedName>
        <fullName evidence="9">Peptidyl-prolyl cis-trans isomerase FKBP13, chloroplastic</fullName>
        <shortName evidence="9">PPIase FKBP13</shortName>
        <ecNumber evidence="11">5.2.1.8</ecNumber>
    </recommendedName>
    <alternativeName>
        <fullName>FK506-binding protein 1</fullName>
    </alternativeName>
    <alternativeName>
        <fullName evidence="9">FK506-binding protein 13</fullName>
        <shortName evidence="9">AtFKBP13</shortName>
    </alternativeName>
    <alternativeName>
        <fullName evidence="10">Immunophilin FKBP13</fullName>
    </alternativeName>
    <alternativeName>
        <fullName>Rotamase</fullName>
    </alternativeName>
</protein>
<reference key="1">
    <citation type="journal article" date="2002" name="Proc. Natl. Acad. Sci. U.S.A.">
        <title>A chloroplast FKBP interacts with and affects the accumulation of Rieske subunit of cytochrome bf complex.</title>
        <authorList>
            <person name="Gupta R."/>
            <person name="Mould R.M."/>
            <person name="He Z."/>
            <person name="Luan S."/>
        </authorList>
    </citation>
    <scope>NUCLEOTIDE SEQUENCE [MRNA]</scope>
    <source>
        <strain>cv. Columbia</strain>
    </source>
</reference>
<reference key="2">
    <citation type="journal article" date="1998" name="DNA Res.">
        <title>Structural analysis of Arabidopsis thaliana chromosome 5. VI. Sequence features of the regions of 1,367,185 bp covered by 19 physically assigned P1 and TAC clones.</title>
        <authorList>
            <person name="Kotani H."/>
            <person name="Nakamura Y."/>
            <person name="Sato S."/>
            <person name="Asamizu E."/>
            <person name="Kaneko T."/>
            <person name="Miyajima N."/>
            <person name="Tabata S."/>
        </authorList>
    </citation>
    <scope>NUCLEOTIDE SEQUENCE [LARGE SCALE GENOMIC DNA]</scope>
    <source>
        <strain>cv. Columbia</strain>
    </source>
</reference>
<reference key="3">
    <citation type="journal article" date="2017" name="Plant J.">
        <title>Araport11: a complete reannotation of the Arabidopsis thaliana reference genome.</title>
        <authorList>
            <person name="Cheng C.Y."/>
            <person name="Krishnakumar V."/>
            <person name="Chan A.P."/>
            <person name="Thibaud-Nissen F."/>
            <person name="Schobel S."/>
            <person name="Town C.D."/>
        </authorList>
    </citation>
    <scope>GENOME REANNOTATION</scope>
    <source>
        <strain>cv. Columbia</strain>
    </source>
</reference>
<reference key="4">
    <citation type="journal article" date="2003" name="Science">
        <title>Empirical analysis of transcriptional activity in the Arabidopsis genome.</title>
        <authorList>
            <person name="Yamada K."/>
            <person name="Lim J."/>
            <person name="Dale J.M."/>
            <person name="Chen H."/>
            <person name="Shinn P."/>
            <person name="Palm C.J."/>
            <person name="Southwick A.M."/>
            <person name="Wu H.C."/>
            <person name="Kim C.J."/>
            <person name="Nguyen M."/>
            <person name="Pham P.K."/>
            <person name="Cheuk R.F."/>
            <person name="Karlin-Newmann G."/>
            <person name="Liu S.X."/>
            <person name="Lam B."/>
            <person name="Sakano H."/>
            <person name="Wu T."/>
            <person name="Yu G."/>
            <person name="Miranda M."/>
            <person name="Quach H.L."/>
            <person name="Tripp M."/>
            <person name="Chang C.H."/>
            <person name="Lee J.M."/>
            <person name="Toriumi M.J."/>
            <person name="Chan M.M."/>
            <person name="Tang C.C."/>
            <person name="Onodera C.S."/>
            <person name="Deng J.M."/>
            <person name="Akiyama K."/>
            <person name="Ansari Y."/>
            <person name="Arakawa T."/>
            <person name="Banh J."/>
            <person name="Banno F."/>
            <person name="Bowser L."/>
            <person name="Brooks S.Y."/>
            <person name="Carninci P."/>
            <person name="Chao Q."/>
            <person name="Choy N."/>
            <person name="Enju A."/>
            <person name="Goldsmith A.D."/>
            <person name="Gurjal M."/>
            <person name="Hansen N.F."/>
            <person name="Hayashizaki Y."/>
            <person name="Johnson-Hopson C."/>
            <person name="Hsuan V.W."/>
            <person name="Iida K."/>
            <person name="Karnes M."/>
            <person name="Khan S."/>
            <person name="Koesema E."/>
            <person name="Ishida J."/>
            <person name="Jiang P.X."/>
            <person name="Jones T."/>
            <person name="Kawai J."/>
            <person name="Kamiya A."/>
            <person name="Meyers C."/>
            <person name="Nakajima M."/>
            <person name="Narusaka M."/>
            <person name="Seki M."/>
            <person name="Sakurai T."/>
            <person name="Satou M."/>
            <person name="Tamse R."/>
            <person name="Vaysberg M."/>
            <person name="Wallender E.K."/>
            <person name="Wong C."/>
            <person name="Yamamura Y."/>
            <person name="Yuan S."/>
            <person name="Shinozaki K."/>
            <person name="Davis R.W."/>
            <person name="Theologis A."/>
            <person name="Ecker J.R."/>
        </authorList>
    </citation>
    <scope>NUCLEOTIDE SEQUENCE [LARGE SCALE MRNA]</scope>
    <source>
        <strain>cv. Columbia</strain>
    </source>
</reference>
<reference key="5">
    <citation type="submission" date="1999-05" db="EMBL/GenBank/DDBJ databases">
        <title>Structure and evolution of FKBP-like genes in Arabidopsis.</title>
        <authorList>
            <person name="Kolukisaoglu U."/>
            <person name="Billion K."/>
            <person name="Eckhoff A."/>
            <person name="Moeller A."/>
            <person name="Saal B."/>
            <person name="Wanke D."/>
            <person name="Schulz B."/>
        </authorList>
    </citation>
    <scope>NUCLEOTIDE SEQUENCE [MRNA] OF 101-176</scope>
    <source>
        <strain>cv. Columbia</strain>
    </source>
</reference>
<reference key="6">
    <citation type="journal article" date="2002" name="J. Biol. Chem.">
        <title>Proteome map of the chloroplast lumen of Arabidopsis thaliana.</title>
        <authorList>
            <person name="Schubert M."/>
            <person name="Petersson U.A."/>
            <person name="Haas B.J."/>
            <person name="Funk C."/>
            <person name="Schroeder W.P."/>
            <person name="Kieselbach T."/>
        </authorList>
    </citation>
    <scope>PROTEIN SEQUENCE OF 80-99</scope>
    <scope>SUBCELLULAR LOCATION</scope>
    <source>
        <strain>cv. Columbia</strain>
    </source>
</reference>
<reference key="7">
    <citation type="journal article" date="2004" name="Plant Physiol.">
        <title>Immunophilins and parvulins. Superfamily of peptidyl prolyl isomerases in Arabidopsis.</title>
        <authorList>
            <person name="He Z."/>
            <person name="Li L."/>
            <person name="Luan S."/>
        </authorList>
    </citation>
    <scope>GENE FAMILY</scope>
    <scope>NOMENCLATURE</scope>
</reference>
<reference key="8">
    <citation type="journal article" date="2006" name="FEBS Lett.">
        <title>Profound redox sensitivity of peptidyl-prolyl isomerase activity in Arabidopsis thylakoid lumen.</title>
        <authorList>
            <person name="Shapiguzov A."/>
            <person name="Edvardsson A."/>
            <person name="Vener A.V."/>
        </authorList>
    </citation>
    <scope>FUNCTION</scope>
</reference>
<reference key="9">
    <citation type="journal article" date="2007" name="Biochemistry">
        <title>Immunophilin AtFKBP13 sustains all peptidyl-prolyl isomerase activity in the thylakoid lumen from Arabidopsis thaliana deficient in AtCYP20-2.</title>
        <authorList>
            <person name="Edvardsson A."/>
            <person name="Shapiguzov A."/>
            <person name="Petersson U.A."/>
            <person name="Schroder W.P."/>
            <person name="Vener A.V."/>
        </authorList>
    </citation>
    <scope>FUNCTION</scope>
</reference>
<reference key="10">
    <citation type="journal article" date="2009" name="Plant Cell Physiol.">
        <title>Peptidyl-prolyl isomerase activity in chloroplast thylakoid lumen is a dispensable function of immunophilins in Arabidopsis thaliana.</title>
        <authorList>
            <person name="Ingelsson B."/>
            <person name="Shapiguzov A."/>
            <person name="Kieselbach T."/>
            <person name="Vener A.V."/>
        </authorList>
    </citation>
    <scope>FUNCTION</scope>
</reference>
<reference key="11">
    <citation type="journal article" date="2014" name="Protein Pept. Lett.">
        <title>Identification of potential targets for thylakoid oxidoreductase AtVKOR/LTO1 in chloroplasts.</title>
        <authorList>
            <person name="Lu Y."/>
            <person name="Du J.J."/>
            <person name="Yu Z.B."/>
            <person name="Peng J.J."/>
            <person name="Xu J.N."/>
            <person name="Wang X.Y."/>
        </authorList>
    </citation>
    <scope>INTERACTION WITH LTO1</scope>
</reference>
<reference key="12">
    <citation type="journal article" date="2004" name="Proc. Natl. Acad. Sci. U.S.A.">
        <title>Structural analysis uncovers a role for redox in regulating FKBP13, an immunophilin of the chloroplast thylakoid lumen.</title>
        <authorList>
            <person name="Gopalan G."/>
            <person name="He Z."/>
            <person name="Balmer Y."/>
            <person name="Romano P."/>
            <person name="Gupta R."/>
            <person name="Heroux A."/>
            <person name="Buchanan B.B."/>
            <person name="Swaminathan K."/>
            <person name="Luan S."/>
        </authorList>
    </citation>
    <scope>X-RAY CRYSTALLOGRAPHY (1.85 ANGSTROMS) OF 80-208</scope>
    <scope>ACTIVITY REGULATION</scope>
    <scope>DISULFIDE BONDS</scope>
    <scope>MUTAGENESIS OF CYS-84; CYS-96; CYS-185 AND CYS-190</scope>
</reference>
<comment type="function">
    <text evidence="5 6 7">PPIases accelerate the folding of proteins. It catalyzes the cis-trans isomerization of proline imidic peptide bonds in oligopeptides. Responsive of the major PPIase activity in the chloroplast thylakoid lumen. Regulates the accumulation of Rieske protein, an essential component of the photosynthetic electron transport chain.</text>
</comment>
<comment type="catalytic activity">
    <reaction evidence="11">
        <text>[protein]-peptidylproline (omega=180) = [protein]-peptidylproline (omega=0)</text>
        <dbReference type="Rhea" id="RHEA:16237"/>
        <dbReference type="Rhea" id="RHEA-COMP:10747"/>
        <dbReference type="Rhea" id="RHEA-COMP:10748"/>
        <dbReference type="ChEBI" id="CHEBI:83833"/>
        <dbReference type="ChEBI" id="CHEBI:83834"/>
        <dbReference type="EC" id="5.2.1.8"/>
    </reaction>
</comment>
<comment type="activity regulation">
    <text evidence="4">PPIase activity is optimal in oxidized form (S-S) and minimal in reduced form (SH). Reduction of the oxidized form is mediated by thioredoxin (TRX-M).</text>
</comment>
<comment type="subunit">
    <text evidence="8">Interacts in vitro with LTO1 (PubMed:25412899). The precursor, but not the mature form of the protein, interacts with the Rieske protein.</text>
</comment>
<comment type="interaction">
    <interactant intactId="EBI-2895757">
        <id>Q9SCY2</id>
    </interactant>
    <interactant intactId="EBI-25506855">
        <id>O23160</id>
        <label>MYB73</label>
    </interactant>
    <organismsDiffer>false</organismsDiffer>
    <experiments>3</experiments>
</comment>
<comment type="interaction">
    <interactant intactId="EBI-2895757">
        <id>Q9SCY2</id>
    </interactant>
    <interactant intactId="EBI-368542">
        <id>P0AA25</id>
        <label>trxA</label>
    </interactant>
    <organismsDiffer>true</organismsDiffer>
    <experiments>2</experiments>
</comment>
<comment type="subcellular location">
    <subcellularLocation>
        <location evidence="3">Plastid</location>
        <location evidence="3">Chloroplast thylakoid lumen</location>
    </subcellularLocation>
</comment>
<comment type="tissue specificity">
    <text>Expressed in stems, leaves and developing flower buds, but not in roots.</text>
</comment>
<comment type="miscellaneous">
    <text>The interaction between FKBP and the Rieske protein probably occurs before they are imported into the thylakoid.</text>
</comment>
<comment type="similarity">
    <text evidence="11">Belongs to the FKBP-type PPIase family.</text>
</comment>
<accession>Q9SCY2</accession>
<accession>Q8M8T4</accession>
<organism>
    <name type="scientific">Arabidopsis thaliana</name>
    <name type="common">Mouse-ear cress</name>
    <dbReference type="NCBI Taxonomy" id="3702"/>
    <lineage>
        <taxon>Eukaryota</taxon>
        <taxon>Viridiplantae</taxon>
        <taxon>Streptophyta</taxon>
        <taxon>Embryophyta</taxon>
        <taxon>Tracheophyta</taxon>
        <taxon>Spermatophyta</taxon>
        <taxon>Magnoliopsida</taxon>
        <taxon>eudicotyledons</taxon>
        <taxon>Gunneridae</taxon>
        <taxon>Pentapetalae</taxon>
        <taxon>rosids</taxon>
        <taxon>malvids</taxon>
        <taxon>Brassicales</taxon>
        <taxon>Brassicaceae</taxon>
        <taxon>Camelineae</taxon>
        <taxon>Arabidopsis</taxon>
    </lineage>
</organism>
<proteinExistence type="evidence at protein level"/>
<keyword id="KW-0002">3D-structure</keyword>
<keyword id="KW-0150">Chloroplast</keyword>
<keyword id="KW-0903">Direct protein sequencing</keyword>
<keyword id="KW-1015">Disulfide bond</keyword>
<keyword id="KW-0413">Isomerase</keyword>
<keyword id="KW-0934">Plastid</keyword>
<keyword id="KW-1185">Reference proteome</keyword>
<keyword id="KW-0697">Rotamase</keyword>
<keyword id="KW-0793">Thylakoid</keyword>
<keyword id="KW-0809">Transit peptide</keyword>
<evidence type="ECO:0000255" key="1"/>
<evidence type="ECO:0000255" key="2">
    <source>
        <dbReference type="PROSITE-ProRule" id="PRU00277"/>
    </source>
</evidence>
<evidence type="ECO:0000269" key="3">
    <source>
    </source>
</evidence>
<evidence type="ECO:0000269" key="4">
    <source>
    </source>
</evidence>
<evidence type="ECO:0000269" key="5">
    <source>
    </source>
</evidence>
<evidence type="ECO:0000269" key="6">
    <source>
    </source>
</evidence>
<evidence type="ECO:0000269" key="7">
    <source>
    </source>
</evidence>
<evidence type="ECO:0000269" key="8">
    <source>
    </source>
</evidence>
<evidence type="ECO:0000303" key="9">
    <source>
    </source>
</evidence>
<evidence type="ECO:0000303" key="10">
    <source>
    </source>
</evidence>
<evidence type="ECO:0000305" key="11"/>
<evidence type="ECO:0000305" key="12">
    <source>
    </source>
</evidence>
<evidence type="ECO:0000312" key="13">
    <source>
        <dbReference type="Araport" id="AT5G45680"/>
    </source>
</evidence>
<evidence type="ECO:0000312" key="14">
    <source>
        <dbReference type="EMBL" id="BAB09210.1"/>
    </source>
</evidence>
<evidence type="ECO:0007829" key="15">
    <source>
        <dbReference type="PDB" id="1U79"/>
    </source>
</evidence>
<name>FKB13_ARATH</name>
<feature type="transit peptide" description="Chloroplast" evidence="1">
    <location>
        <begin position="1"/>
        <end status="unknown"/>
    </location>
</feature>
<feature type="transit peptide" description="Thylakoid" evidence="3">
    <location>
        <begin status="unknown"/>
        <end position="79"/>
    </location>
</feature>
<feature type="chain" id="PRO_0000025526" description="Peptidyl-prolyl cis-trans isomerase FKBP13, chloroplastic">
    <location>
        <begin position="80"/>
        <end position="208"/>
    </location>
</feature>
<feature type="domain" description="PPIase FKBP-type" evidence="2">
    <location>
        <begin position="109"/>
        <end position="208"/>
    </location>
</feature>
<feature type="disulfide bond" evidence="4">
    <location>
        <begin position="84"/>
        <end position="96"/>
    </location>
</feature>
<feature type="disulfide bond" evidence="4">
    <location>
        <begin position="185"/>
        <end position="190"/>
    </location>
</feature>
<feature type="mutagenesis site" description="Reduced PPIase activity; when associated with S-96." evidence="4">
    <original>C</original>
    <variation>S</variation>
    <location>
        <position position="84"/>
    </location>
</feature>
<feature type="mutagenesis site" description="Reduced PPIase activity; when associated with S-84." evidence="4">
    <original>C</original>
    <variation>S</variation>
    <location>
        <position position="96"/>
    </location>
</feature>
<feature type="mutagenesis site" description="Reduced PPIase activity; when associated with S-190." evidence="4">
    <original>C</original>
    <variation>S</variation>
    <location>
        <position position="185"/>
    </location>
</feature>
<feature type="mutagenesis site" description="Reduced PPIase activity; when associated with S-185." evidence="4">
    <original>C</original>
    <variation>S</variation>
    <location>
        <position position="190"/>
    </location>
</feature>
<feature type="sequence conflict" description="In Ref. 1; CAD35362." evidence="11" ref="1">
    <original>S</original>
    <variation>T</variation>
    <location>
        <position position="7"/>
    </location>
</feature>
<feature type="strand" evidence="15">
    <location>
        <begin position="94"/>
        <end position="99"/>
    </location>
</feature>
<feature type="strand" evidence="15">
    <location>
        <begin position="111"/>
        <end position="119"/>
    </location>
</feature>
<feature type="strand" evidence="15">
    <location>
        <begin position="125"/>
        <end position="128"/>
    </location>
</feature>
<feature type="helix" evidence="15">
    <location>
        <begin position="129"/>
        <end position="132"/>
    </location>
</feature>
<feature type="strand" evidence="15">
    <location>
        <begin position="136"/>
        <end position="139"/>
    </location>
</feature>
<feature type="strand" evidence="15">
    <location>
        <begin position="142"/>
        <end position="145"/>
    </location>
</feature>
<feature type="helix" evidence="15">
    <location>
        <begin position="147"/>
        <end position="154"/>
    </location>
</feature>
<feature type="strand" evidence="15">
    <location>
        <begin position="167"/>
        <end position="172"/>
    </location>
</feature>
<feature type="helix" evidence="15">
    <location>
        <begin position="174"/>
        <end position="176"/>
    </location>
</feature>
<feature type="turn" evidence="15">
    <location>
        <begin position="177"/>
        <end position="181"/>
    </location>
</feature>
<feature type="strand" evidence="15">
    <location>
        <begin position="183"/>
        <end position="186"/>
    </location>
</feature>
<feature type="strand" evidence="15">
    <location>
        <begin position="189"/>
        <end position="192"/>
    </location>
</feature>
<feature type="strand" evidence="15">
    <location>
        <begin position="198"/>
        <end position="207"/>
    </location>
</feature>
<sequence length="208" mass="22039">MSSLGFSVGTCSPPSEKRKCRFLVNNSLNKAEAINLRNKQKVSSDPELSFAQLSSCGRREAIIGFGFSIGLLDNVSALAETTSCEFSVSPSGLAFCDKVVGYGPEAVKGQLIKAHYVGKLENGKVFDSSYNRGKPLTFRIGVGEVIKGWDQGILGSDGIPPMLTGGKRTLRIPPELAYGDRGAGCKGGSCLIPPASVLLFDIEYIGKA</sequence>
<dbReference type="EC" id="5.2.1.8" evidence="11"/>
<dbReference type="EMBL" id="AJ490171">
    <property type="protein sequence ID" value="CAD35362.1"/>
    <property type="molecule type" value="mRNA"/>
</dbReference>
<dbReference type="EMBL" id="AB012245">
    <property type="protein sequence ID" value="BAB09210.1"/>
    <property type="molecule type" value="Genomic_DNA"/>
</dbReference>
<dbReference type="EMBL" id="CP002688">
    <property type="protein sequence ID" value="AED95283.1"/>
    <property type="molecule type" value="Genomic_DNA"/>
</dbReference>
<dbReference type="EMBL" id="AY065047">
    <property type="protein sequence ID" value="AAL57682.1"/>
    <property type="molecule type" value="mRNA"/>
</dbReference>
<dbReference type="EMBL" id="AY091680">
    <property type="protein sequence ID" value="AAM10279.1"/>
    <property type="molecule type" value="mRNA"/>
</dbReference>
<dbReference type="EMBL" id="AJ242483">
    <property type="protein sequence ID" value="CAB64723.1"/>
    <property type="molecule type" value="mRNA"/>
</dbReference>
<dbReference type="RefSeq" id="NP_199380.1">
    <property type="nucleotide sequence ID" value="NM_123935.5"/>
</dbReference>
<dbReference type="PDB" id="1U79">
    <property type="method" value="X-ray"/>
    <property type="resolution" value="1.85 A"/>
    <property type="chains" value="A/B/C/D/E=80-208"/>
</dbReference>
<dbReference type="PDB" id="1Y0O">
    <property type="method" value="X-ray"/>
    <property type="resolution" value="1.89 A"/>
    <property type="chains" value="A/B/C/D/E=80-208"/>
</dbReference>
<dbReference type="PDBsum" id="1U79"/>
<dbReference type="PDBsum" id="1Y0O"/>
<dbReference type="SMR" id="Q9SCY2"/>
<dbReference type="BioGRID" id="19856">
    <property type="interactions" value="3"/>
</dbReference>
<dbReference type="FunCoup" id="Q9SCY2">
    <property type="interactions" value="898"/>
</dbReference>
<dbReference type="IntAct" id="Q9SCY2">
    <property type="interactions" value="2"/>
</dbReference>
<dbReference type="STRING" id="3702.Q9SCY2"/>
<dbReference type="iPTMnet" id="Q9SCY2"/>
<dbReference type="PaxDb" id="3702-AT5G45680.1"/>
<dbReference type="ProteomicsDB" id="230582"/>
<dbReference type="EnsemblPlants" id="AT5G45680.1">
    <property type="protein sequence ID" value="AT5G45680.1"/>
    <property type="gene ID" value="AT5G45680"/>
</dbReference>
<dbReference type="GeneID" id="834607"/>
<dbReference type="Gramene" id="AT5G45680.1">
    <property type="protein sequence ID" value="AT5G45680.1"/>
    <property type="gene ID" value="AT5G45680"/>
</dbReference>
<dbReference type="KEGG" id="ath:AT5G45680"/>
<dbReference type="Araport" id="AT5G45680"/>
<dbReference type="TAIR" id="AT5G45680">
    <property type="gene designation" value="FKBP13"/>
</dbReference>
<dbReference type="eggNOG" id="KOG0549">
    <property type="taxonomic scope" value="Eukaryota"/>
</dbReference>
<dbReference type="HOGENOM" id="CLU_013615_10_0_1"/>
<dbReference type="InParanoid" id="Q9SCY2"/>
<dbReference type="OMA" id="ETTSCEF"/>
<dbReference type="PhylomeDB" id="Q9SCY2"/>
<dbReference type="BRENDA" id="5.2.1.8">
    <property type="organism ID" value="399"/>
</dbReference>
<dbReference type="EvolutionaryTrace" id="Q9SCY2"/>
<dbReference type="PRO" id="PR:Q9SCY2"/>
<dbReference type="Proteomes" id="UP000006548">
    <property type="component" value="Chromosome 5"/>
</dbReference>
<dbReference type="ExpressionAtlas" id="Q9SCY2">
    <property type="expression patterns" value="baseline and differential"/>
</dbReference>
<dbReference type="GO" id="GO:0009507">
    <property type="term" value="C:chloroplast"/>
    <property type="evidence" value="ECO:0007005"/>
    <property type="project" value="TAIR"/>
</dbReference>
<dbReference type="GO" id="GO:0009543">
    <property type="term" value="C:chloroplast thylakoid lumen"/>
    <property type="evidence" value="ECO:0007669"/>
    <property type="project" value="UniProtKB-SubCell"/>
</dbReference>
<dbReference type="GO" id="GO:0009536">
    <property type="term" value="C:plastid"/>
    <property type="evidence" value="ECO:0007005"/>
    <property type="project" value="TAIR"/>
</dbReference>
<dbReference type="GO" id="GO:0031977">
    <property type="term" value="C:thylakoid lumen"/>
    <property type="evidence" value="ECO:0007005"/>
    <property type="project" value="TAIR"/>
</dbReference>
<dbReference type="GO" id="GO:0003755">
    <property type="term" value="F:peptidyl-prolyl cis-trans isomerase activity"/>
    <property type="evidence" value="ECO:0000314"/>
    <property type="project" value="TAIR"/>
</dbReference>
<dbReference type="FunFam" id="3.10.50.40:FF:000032">
    <property type="entry name" value="Peptidylprolyl isomerase"/>
    <property type="match status" value="1"/>
</dbReference>
<dbReference type="Gene3D" id="3.10.50.40">
    <property type="match status" value="1"/>
</dbReference>
<dbReference type="InterPro" id="IPR044183">
    <property type="entry name" value="PNSL4/FKBP13-like"/>
</dbReference>
<dbReference type="InterPro" id="IPR046357">
    <property type="entry name" value="PPIase_dom_sf"/>
</dbReference>
<dbReference type="InterPro" id="IPR001179">
    <property type="entry name" value="PPIase_FKBP_dom"/>
</dbReference>
<dbReference type="PANTHER" id="PTHR47833:SF2">
    <property type="entry name" value="PEPTIDYLPROLYL ISOMERASE"/>
    <property type="match status" value="1"/>
</dbReference>
<dbReference type="PANTHER" id="PTHR47833">
    <property type="entry name" value="PHOTOSYNTHETIC NDH SUBUNIT OF LUMENAL LOCATION 4, CHLOROPLASTIC"/>
    <property type="match status" value="1"/>
</dbReference>
<dbReference type="Pfam" id="PF00254">
    <property type="entry name" value="FKBP_C"/>
    <property type="match status" value="1"/>
</dbReference>
<dbReference type="SUPFAM" id="SSF54534">
    <property type="entry name" value="FKBP-like"/>
    <property type="match status" value="1"/>
</dbReference>
<dbReference type="PROSITE" id="PS50059">
    <property type="entry name" value="FKBP_PPIASE"/>
    <property type="match status" value="1"/>
</dbReference>